<proteinExistence type="predicted"/>
<feature type="chain" id="PRO_0000244022" description="Uncharacterized protein R625">
    <location>
        <begin position="1"/>
        <end position="186"/>
    </location>
</feature>
<sequence length="186" mass="21655">MFITSILRLIISYGLLEQLILESFLDLEYPENIIDSKNQNSMDGELNVMESLRNSHPKLYIREISNDNITFPCEDNNGWIEYKRTLTECDDLKIQQYATQMRWRISQNKRQRAVYYIGLDDDGSIYGLSGKAILDNLDYFVKITNIINASIFSVLLININGSTIIKIGVTIKKLKDDIYFNEDEEY</sequence>
<organismHost>
    <name type="scientific">Acanthamoeba polyphaga</name>
    <name type="common">Amoeba</name>
    <dbReference type="NCBI Taxonomy" id="5757"/>
</organismHost>
<gene>
    <name type="ordered locus">MIMI_R625</name>
</gene>
<keyword id="KW-1185">Reference proteome</keyword>
<protein>
    <recommendedName>
        <fullName>Uncharacterized protein R625</fullName>
    </recommendedName>
</protein>
<organism>
    <name type="scientific">Acanthamoeba polyphaga mimivirus</name>
    <name type="common">APMV</name>
    <dbReference type="NCBI Taxonomy" id="212035"/>
    <lineage>
        <taxon>Viruses</taxon>
        <taxon>Varidnaviria</taxon>
        <taxon>Bamfordvirae</taxon>
        <taxon>Nucleocytoviricota</taxon>
        <taxon>Megaviricetes</taxon>
        <taxon>Imitervirales</taxon>
        <taxon>Mimiviridae</taxon>
        <taxon>Megamimivirinae</taxon>
        <taxon>Mimivirus</taxon>
        <taxon>Mimivirus bradfordmassiliense</taxon>
    </lineage>
</organism>
<dbReference type="EMBL" id="AY653733">
    <property type="protein sequence ID" value="AAV50886.1"/>
    <property type="molecule type" value="Genomic_DNA"/>
</dbReference>
<dbReference type="KEGG" id="vg:9925266"/>
<dbReference type="OrthoDB" id="24367at10239"/>
<dbReference type="Proteomes" id="UP000001134">
    <property type="component" value="Genome"/>
</dbReference>
<accession>Q5UR71</accession>
<reference key="1">
    <citation type="journal article" date="2004" name="Science">
        <title>The 1.2-megabase genome sequence of Mimivirus.</title>
        <authorList>
            <person name="Raoult D."/>
            <person name="Audic S."/>
            <person name="Robert C."/>
            <person name="Abergel C."/>
            <person name="Renesto P."/>
            <person name="Ogata H."/>
            <person name="La Scola B."/>
            <person name="Susan M."/>
            <person name="Claverie J.-M."/>
        </authorList>
    </citation>
    <scope>NUCLEOTIDE SEQUENCE [LARGE SCALE GENOMIC DNA]</scope>
    <source>
        <strain>Rowbotham-Bradford</strain>
    </source>
</reference>
<name>YR625_MIMIV</name>